<accession>P48125</accession>
<evidence type="ECO:0000250" key="1"/>
<evidence type="ECO:0000305" key="2"/>
<reference key="1">
    <citation type="journal article" date="1995" name="Plant Mol. Biol. Rep.">
        <title>Nucleotide sequence of the cyanelle DNA from Cyanophora paradoxa.</title>
        <authorList>
            <person name="Stirewalt V.L."/>
            <person name="Michalowski C.B."/>
            <person name="Loeffelhardt W."/>
            <person name="Bohnert H.J."/>
            <person name="Bryant D.A."/>
        </authorList>
    </citation>
    <scope>NUCLEOTIDE SEQUENCE [LARGE SCALE GENOMIC DNA]</scope>
    <source>
        <strain>UTEX LB 555 / Pringsheim</strain>
    </source>
</reference>
<reference key="2">
    <citation type="book" date="1997" name="Eukaryotism and symbiosis">
        <title>The complete sequence of the cyanelle genome of Cyanophora paradoxa: the genetic complexity of a primitive plastid.</title>
        <editorList>
            <person name="Schenk H.E.A."/>
            <person name="Herrmann R."/>
            <person name="Jeon K.W."/>
            <person name="Mueller N.E."/>
            <person name="Schwemmler W."/>
        </editorList>
        <authorList>
            <person name="Loeffelhardt W."/>
            <person name="Stirewalt V.L."/>
            <person name="Michalowski C.B."/>
            <person name="Annarella M."/>
            <person name="Farley J.Y."/>
            <person name="Schluchter W.M."/>
            <person name="Chung S."/>
            <person name="Newmann-Spallart C."/>
            <person name="Steiner J.M."/>
            <person name="Jakowitsch J."/>
            <person name="Bohnert H.J."/>
            <person name="Bryant D.A."/>
        </authorList>
    </citation>
    <scope>NUCLEOTIDE SEQUENCE [LARGE SCALE GENOMIC DNA]</scope>
    <source>
        <strain>UTEX LB 555 / Pringsheim</strain>
    </source>
</reference>
<comment type="subunit">
    <text evidence="1">Part of the 50S ribosomal subunit.</text>
</comment>
<comment type="subcellular location">
    <subcellularLocation>
        <location>Plastid</location>
        <location>Cyanelle</location>
    </subcellularLocation>
</comment>
<comment type="similarity">
    <text evidence="2">Belongs to the universal ribosomal protein uL1 family.</text>
</comment>
<organism>
    <name type="scientific">Cyanophora paradoxa</name>
    <dbReference type="NCBI Taxonomy" id="2762"/>
    <lineage>
        <taxon>Eukaryota</taxon>
        <taxon>Glaucocystophyceae</taxon>
        <taxon>Cyanophoraceae</taxon>
        <taxon>Cyanophora</taxon>
    </lineage>
</organism>
<gene>
    <name type="primary">rpl1</name>
</gene>
<name>RK1_CYAPA</name>
<feature type="chain" id="PRO_0000125787" description="Large ribosomal subunit protein uL1c">
    <location>
        <begin position="1"/>
        <end position="237"/>
    </location>
</feature>
<keyword id="KW-0194">Cyanelle</keyword>
<keyword id="KW-0934">Plastid</keyword>
<keyword id="KW-0687">Ribonucleoprotein</keyword>
<keyword id="KW-0689">Ribosomal protein</keyword>
<keyword id="KW-0694">RNA-binding</keyword>
<keyword id="KW-0699">rRNA-binding</keyword>
<protein>
    <recommendedName>
        <fullName evidence="2">Large ribosomal subunit protein uL1c</fullName>
    </recommendedName>
    <alternativeName>
        <fullName>50S ribosomal protein L1, cyanelle</fullName>
    </alternativeName>
</protein>
<sequence>MKKRSRRMQELVGKVEEQLYEPLEAIQLLKQISTAKFIETVEVHCRLGIDPKYNDQQLRATVTLPNGTGQTLRVAVITRGEKINEASTAGADLVGAEELIDEIQNGRLDFDCLIATPDMMPQVAKLGRVLGPRGLMPSPKGGTVTFDLAQAINDFKAGKLEFRNDRTGIVHVLFGKANFSEEALLGNLKAVQEAVDRNRPSGVKGKYWKSIYITSTMSPSIEVDYNLLRDLKLTENT</sequence>
<dbReference type="EMBL" id="U30821">
    <property type="protein sequence ID" value="AAA81203.1"/>
    <property type="molecule type" value="Genomic_DNA"/>
</dbReference>
<dbReference type="PIR" id="T06860">
    <property type="entry name" value="T06860"/>
</dbReference>
<dbReference type="RefSeq" id="NP_043172.1">
    <property type="nucleotide sequence ID" value="NC_001675.1"/>
</dbReference>
<dbReference type="SMR" id="P48125"/>
<dbReference type="GeneID" id="801582"/>
<dbReference type="GO" id="GO:0009842">
    <property type="term" value="C:cyanelle"/>
    <property type="evidence" value="ECO:0007669"/>
    <property type="project" value="UniProtKB-SubCell"/>
</dbReference>
<dbReference type="GO" id="GO:0015934">
    <property type="term" value="C:large ribosomal subunit"/>
    <property type="evidence" value="ECO:0007669"/>
    <property type="project" value="InterPro"/>
</dbReference>
<dbReference type="GO" id="GO:0019843">
    <property type="term" value="F:rRNA binding"/>
    <property type="evidence" value="ECO:0007669"/>
    <property type="project" value="UniProtKB-KW"/>
</dbReference>
<dbReference type="GO" id="GO:0003735">
    <property type="term" value="F:structural constituent of ribosome"/>
    <property type="evidence" value="ECO:0007669"/>
    <property type="project" value="InterPro"/>
</dbReference>
<dbReference type="GO" id="GO:0006412">
    <property type="term" value="P:translation"/>
    <property type="evidence" value="ECO:0007669"/>
    <property type="project" value="InterPro"/>
</dbReference>
<dbReference type="CDD" id="cd00403">
    <property type="entry name" value="Ribosomal_L1"/>
    <property type="match status" value="1"/>
</dbReference>
<dbReference type="FunFam" id="3.40.50.790:FF:000001">
    <property type="entry name" value="50S ribosomal protein L1"/>
    <property type="match status" value="1"/>
</dbReference>
<dbReference type="Gene3D" id="3.30.190.20">
    <property type="match status" value="1"/>
</dbReference>
<dbReference type="Gene3D" id="3.40.50.790">
    <property type="match status" value="1"/>
</dbReference>
<dbReference type="HAMAP" id="MF_01318_B">
    <property type="entry name" value="Ribosomal_uL1_B"/>
    <property type="match status" value="1"/>
</dbReference>
<dbReference type="InterPro" id="IPR005878">
    <property type="entry name" value="Ribosom_uL1_bac-type"/>
</dbReference>
<dbReference type="InterPro" id="IPR002143">
    <property type="entry name" value="Ribosomal_uL1"/>
</dbReference>
<dbReference type="InterPro" id="IPR023674">
    <property type="entry name" value="Ribosomal_uL1-like"/>
</dbReference>
<dbReference type="InterPro" id="IPR028364">
    <property type="entry name" value="Ribosomal_uL1/biogenesis"/>
</dbReference>
<dbReference type="InterPro" id="IPR016095">
    <property type="entry name" value="Ribosomal_uL1_3-a/b-sand"/>
</dbReference>
<dbReference type="InterPro" id="IPR023673">
    <property type="entry name" value="Ribosomal_uL1_CS"/>
</dbReference>
<dbReference type="NCBIfam" id="TIGR01169">
    <property type="entry name" value="rplA_bact"/>
    <property type="match status" value="1"/>
</dbReference>
<dbReference type="PANTHER" id="PTHR36427">
    <property type="entry name" value="54S RIBOSOMAL PROTEIN L1, MITOCHONDRIAL"/>
    <property type="match status" value="1"/>
</dbReference>
<dbReference type="PANTHER" id="PTHR36427:SF3">
    <property type="entry name" value="LARGE RIBOSOMAL SUBUNIT PROTEIN UL1M"/>
    <property type="match status" value="1"/>
</dbReference>
<dbReference type="Pfam" id="PF00687">
    <property type="entry name" value="Ribosomal_L1"/>
    <property type="match status" value="1"/>
</dbReference>
<dbReference type="PIRSF" id="PIRSF002155">
    <property type="entry name" value="Ribosomal_L1"/>
    <property type="match status" value="1"/>
</dbReference>
<dbReference type="SUPFAM" id="SSF56808">
    <property type="entry name" value="Ribosomal protein L1"/>
    <property type="match status" value="1"/>
</dbReference>
<dbReference type="PROSITE" id="PS01199">
    <property type="entry name" value="RIBOSOMAL_L1"/>
    <property type="match status" value="1"/>
</dbReference>
<proteinExistence type="inferred from homology"/>
<geneLocation type="cyanelle"/>